<accession>Q7J1B4</accession>
<keyword id="KW-0150">Chloroplast</keyword>
<keyword id="KW-0472">Membrane</keyword>
<keyword id="KW-0602">Photosynthesis</keyword>
<keyword id="KW-0604">Photosystem II</keyword>
<keyword id="KW-0934">Plastid</keyword>
<keyword id="KW-0674">Reaction center</keyword>
<keyword id="KW-0793">Thylakoid</keyword>
<keyword id="KW-0812">Transmembrane</keyword>
<keyword id="KW-1133">Transmembrane helix</keyword>
<organism>
    <name type="scientific">Dioscorea bulbifera</name>
    <name type="common">Air potato</name>
    <name type="synonym">Dioscorea latifolia</name>
    <dbReference type="NCBI Taxonomy" id="35874"/>
    <lineage>
        <taxon>Eukaryota</taxon>
        <taxon>Viridiplantae</taxon>
        <taxon>Streptophyta</taxon>
        <taxon>Embryophyta</taxon>
        <taxon>Tracheophyta</taxon>
        <taxon>Spermatophyta</taxon>
        <taxon>Magnoliopsida</taxon>
        <taxon>Liliopsida</taxon>
        <taxon>Dioscoreales</taxon>
        <taxon>Dioscoreaceae</taxon>
        <taxon>Dioscorea</taxon>
    </lineage>
</organism>
<gene>
    <name evidence="1" type="primary">psbL</name>
</gene>
<comment type="function">
    <text evidence="1">One of the components of the core complex of photosystem II (PSII). PSII is a light-driven water:plastoquinone oxidoreductase that uses light energy to abstract electrons from H(2)O, generating O(2) and a proton gradient subsequently used for ATP formation. It consists of a core antenna complex that captures photons, and an electron transfer chain that converts photonic excitation into a charge separation. This subunit is found at the monomer-monomer interface and is required for correct PSII assembly and/or dimerization.</text>
</comment>
<comment type="subunit">
    <text evidence="1">PSII is composed of 1 copy each of membrane proteins PsbA, PsbB, PsbC, PsbD, PsbE, PsbF, PsbH, PsbI, PsbJ, PsbK, PsbL, PsbM, PsbT, PsbX, PsbY, PsbZ, Psb30/Ycf12, at least 3 peripheral proteins of the oxygen-evolving complex and a large number of cofactors. It forms dimeric complexes.</text>
</comment>
<comment type="subcellular location">
    <subcellularLocation>
        <location evidence="1">Plastid</location>
        <location evidence="1">Chloroplast thylakoid membrane</location>
        <topology evidence="1">Single-pass membrane protein</topology>
    </subcellularLocation>
</comment>
<comment type="similarity">
    <text evidence="1">Belongs to the PsbL family.</text>
</comment>
<geneLocation type="chloroplast"/>
<dbReference type="EMBL" id="AF123834">
    <property type="protein sequence ID" value="AAG26216.1"/>
    <property type="molecule type" value="Genomic_DNA"/>
</dbReference>
<dbReference type="RefSeq" id="YP_009528901.1">
    <property type="nucleotide sequence ID" value="NC_039708.1"/>
</dbReference>
<dbReference type="SMR" id="Q7J1B4"/>
<dbReference type="GeneID" id="38328463"/>
<dbReference type="GO" id="GO:0009535">
    <property type="term" value="C:chloroplast thylakoid membrane"/>
    <property type="evidence" value="ECO:0007669"/>
    <property type="project" value="UniProtKB-SubCell"/>
</dbReference>
<dbReference type="GO" id="GO:0009539">
    <property type="term" value="C:photosystem II reaction center"/>
    <property type="evidence" value="ECO:0007669"/>
    <property type="project" value="InterPro"/>
</dbReference>
<dbReference type="GO" id="GO:0015979">
    <property type="term" value="P:photosynthesis"/>
    <property type="evidence" value="ECO:0007669"/>
    <property type="project" value="UniProtKB-UniRule"/>
</dbReference>
<dbReference type="HAMAP" id="MF_01317">
    <property type="entry name" value="PSII_PsbL"/>
    <property type="match status" value="1"/>
</dbReference>
<dbReference type="InterPro" id="IPR003372">
    <property type="entry name" value="PSII_PsbL"/>
</dbReference>
<dbReference type="InterPro" id="IPR037266">
    <property type="entry name" value="PSII_PsbL_sf"/>
</dbReference>
<dbReference type="NCBIfam" id="NF001972">
    <property type="entry name" value="PRK00753.1"/>
    <property type="match status" value="1"/>
</dbReference>
<dbReference type="Pfam" id="PF02419">
    <property type="entry name" value="PsbL"/>
    <property type="match status" value="1"/>
</dbReference>
<dbReference type="SUPFAM" id="SSF161017">
    <property type="entry name" value="Photosystem II reaction center protein L, PsbL"/>
    <property type="match status" value="1"/>
</dbReference>
<sequence>MTQSNPNEQNVELNRTSLYWGLLLIFVLAVLFSNYFFN</sequence>
<feature type="chain" id="PRO_0000219710" description="Photosystem II reaction center protein L">
    <location>
        <begin position="1"/>
        <end position="38"/>
    </location>
</feature>
<feature type="transmembrane region" description="Helical" evidence="1">
    <location>
        <begin position="17"/>
        <end position="37"/>
    </location>
</feature>
<name>PSBL_DIOBU</name>
<protein>
    <recommendedName>
        <fullName evidence="1">Photosystem II reaction center protein L</fullName>
        <shortName evidence="1">PSII-L</shortName>
    </recommendedName>
</protein>
<reference key="1">
    <citation type="journal article" date="2000" name="Am. J. Bot.">
        <title>Utility of 17 chloroplast genes for inferring the phylogeny of the basal angiosperms.</title>
        <authorList>
            <person name="Graham S.W."/>
            <person name="Olmstead R.G."/>
        </authorList>
    </citation>
    <scope>NUCLEOTIDE SEQUENCE [GENOMIC DNA]</scope>
</reference>
<proteinExistence type="inferred from homology"/>
<evidence type="ECO:0000255" key="1">
    <source>
        <dbReference type="HAMAP-Rule" id="MF_01317"/>
    </source>
</evidence>